<feature type="chain" id="PRO_0000272438" description="Phosphate import ATP-binding protein PstB">
    <location>
        <begin position="1"/>
        <end position="254"/>
    </location>
</feature>
<feature type="domain" description="ABC transporter" evidence="1">
    <location>
        <begin position="9"/>
        <end position="249"/>
    </location>
</feature>
<feature type="binding site" evidence="1">
    <location>
        <begin position="41"/>
        <end position="48"/>
    </location>
    <ligand>
        <name>ATP</name>
        <dbReference type="ChEBI" id="CHEBI:30616"/>
    </ligand>
</feature>
<reference key="1">
    <citation type="journal article" date="2006" name="Nat. Genet.">
        <title>The multidrug-resistant human pathogen Clostridium difficile has a highly mobile, mosaic genome.</title>
        <authorList>
            <person name="Sebaihia M."/>
            <person name="Wren B.W."/>
            <person name="Mullany P."/>
            <person name="Fairweather N.F."/>
            <person name="Minton N."/>
            <person name="Stabler R."/>
            <person name="Thomson N.R."/>
            <person name="Roberts A.P."/>
            <person name="Cerdeno-Tarraga A.M."/>
            <person name="Wang H."/>
            <person name="Holden M.T.G."/>
            <person name="Wright A."/>
            <person name="Churcher C."/>
            <person name="Quail M.A."/>
            <person name="Baker S."/>
            <person name="Bason N."/>
            <person name="Brooks K."/>
            <person name="Chillingworth T."/>
            <person name="Cronin A."/>
            <person name="Davis P."/>
            <person name="Dowd L."/>
            <person name="Fraser A."/>
            <person name="Feltwell T."/>
            <person name="Hance Z."/>
            <person name="Holroyd S."/>
            <person name="Jagels K."/>
            <person name="Moule S."/>
            <person name="Mungall K."/>
            <person name="Price C."/>
            <person name="Rabbinowitsch E."/>
            <person name="Sharp S."/>
            <person name="Simmonds M."/>
            <person name="Stevens K."/>
            <person name="Unwin L."/>
            <person name="Whithead S."/>
            <person name="Dupuy B."/>
            <person name="Dougan G."/>
            <person name="Barrell B."/>
            <person name="Parkhill J."/>
        </authorList>
    </citation>
    <scope>NUCLEOTIDE SEQUENCE [LARGE SCALE GENOMIC DNA]</scope>
    <source>
        <strain>630</strain>
    </source>
</reference>
<name>PSTB_CLOD6</name>
<gene>
    <name evidence="1" type="primary">pstB</name>
    <name type="synonym">phoT</name>
    <name type="ordered locus">CD630_32610</name>
</gene>
<accession>Q180A5</accession>
<protein>
    <recommendedName>
        <fullName evidence="1">Phosphate import ATP-binding protein PstB</fullName>
        <ecNumber evidence="1">7.3.2.1</ecNumber>
    </recommendedName>
    <alternativeName>
        <fullName evidence="1">ABC phosphate transporter</fullName>
    </alternativeName>
    <alternativeName>
        <fullName evidence="1">Phosphate-transporting ATPase</fullName>
    </alternativeName>
</protein>
<proteinExistence type="inferred from homology"/>
<comment type="function">
    <text evidence="1">Part of the ABC transporter complex PstSACB involved in phosphate import. Responsible for energy coupling to the transport system.</text>
</comment>
<comment type="catalytic activity">
    <reaction evidence="1">
        <text>phosphate(out) + ATP + H2O = ADP + 2 phosphate(in) + H(+)</text>
        <dbReference type="Rhea" id="RHEA:24440"/>
        <dbReference type="ChEBI" id="CHEBI:15377"/>
        <dbReference type="ChEBI" id="CHEBI:15378"/>
        <dbReference type="ChEBI" id="CHEBI:30616"/>
        <dbReference type="ChEBI" id="CHEBI:43474"/>
        <dbReference type="ChEBI" id="CHEBI:456216"/>
        <dbReference type="EC" id="7.3.2.1"/>
    </reaction>
</comment>
<comment type="subunit">
    <text evidence="1">The complex is composed of two ATP-binding proteins (PstB), two transmembrane proteins (PstC and PstA) and a solute-binding protein (PstS).</text>
</comment>
<comment type="subcellular location">
    <subcellularLocation>
        <location evidence="1">Cell membrane</location>
        <topology evidence="1">Peripheral membrane protein</topology>
    </subcellularLocation>
</comment>
<comment type="similarity">
    <text evidence="1">Belongs to the ABC transporter superfamily. Phosphate importer (TC 3.A.1.7) family.</text>
</comment>
<sequence>MELIDKIKMSVKDLDLFYGDKQALKKINMDIKENKVTALIGPSGCGKSTFIRTLNRMNDLIEDVTIKGNISVDGEDIYTSDDVINLRTKVGMVFQKPNPFPMSIYDNVAYGPRTHGLRDKKQLDKIVEESLKGAAIWDEVKDRLKSSALGLSGGQQQRICIARAIAMRPEVILMDEPTSALDPISTLKVEELIEDLKKDYTIVIVTHNMQQAARISDETAFFLNGEVIEFSDTKTMFTTPVDKRTEDYITGRFG</sequence>
<evidence type="ECO:0000255" key="1">
    <source>
        <dbReference type="HAMAP-Rule" id="MF_01702"/>
    </source>
</evidence>
<organism>
    <name type="scientific">Clostridioides difficile (strain 630)</name>
    <name type="common">Peptoclostridium difficile</name>
    <dbReference type="NCBI Taxonomy" id="272563"/>
    <lineage>
        <taxon>Bacteria</taxon>
        <taxon>Bacillati</taxon>
        <taxon>Bacillota</taxon>
        <taxon>Clostridia</taxon>
        <taxon>Peptostreptococcales</taxon>
        <taxon>Peptostreptococcaceae</taxon>
        <taxon>Clostridioides</taxon>
    </lineage>
</organism>
<keyword id="KW-0067">ATP-binding</keyword>
<keyword id="KW-1003">Cell membrane</keyword>
<keyword id="KW-0472">Membrane</keyword>
<keyword id="KW-0547">Nucleotide-binding</keyword>
<keyword id="KW-0592">Phosphate transport</keyword>
<keyword id="KW-1185">Reference proteome</keyword>
<keyword id="KW-1278">Translocase</keyword>
<keyword id="KW-0813">Transport</keyword>
<dbReference type="EC" id="7.3.2.1" evidence="1"/>
<dbReference type="EMBL" id="AM180355">
    <property type="protein sequence ID" value="CAJ70158.1"/>
    <property type="molecule type" value="Genomic_DNA"/>
</dbReference>
<dbReference type="RefSeq" id="WP_003432349.1">
    <property type="nucleotide sequence ID" value="NZ_JAUPES010000002.1"/>
</dbReference>
<dbReference type="RefSeq" id="YP_001089777.1">
    <property type="nucleotide sequence ID" value="NC_009089.1"/>
</dbReference>
<dbReference type="SMR" id="Q180A5"/>
<dbReference type="STRING" id="272563.CD630_32610"/>
<dbReference type="EnsemblBacteria" id="CAJ70158">
    <property type="protein sequence ID" value="CAJ70158"/>
    <property type="gene ID" value="CD630_32610"/>
</dbReference>
<dbReference type="GeneID" id="66355680"/>
<dbReference type="KEGG" id="cdf:CD630_32610"/>
<dbReference type="KEGG" id="pdc:CDIF630_03559"/>
<dbReference type="PATRIC" id="fig|272563.120.peg.3445"/>
<dbReference type="eggNOG" id="COG1117">
    <property type="taxonomic scope" value="Bacteria"/>
</dbReference>
<dbReference type="OrthoDB" id="9804199at2"/>
<dbReference type="PhylomeDB" id="Q180A5"/>
<dbReference type="BioCyc" id="PDIF272563:G12WB-3429-MONOMER"/>
<dbReference type="Proteomes" id="UP000001978">
    <property type="component" value="Chromosome"/>
</dbReference>
<dbReference type="GO" id="GO:0005886">
    <property type="term" value="C:plasma membrane"/>
    <property type="evidence" value="ECO:0007669"/>
    <property type="project" value="UniProtKB-SubCell"/>
</dbReference>
<dbReference type="GO" id="GO:0005524">
    <property type="term" value="F:ATP binding"/>
    <property type="evidence" value="ECO:0007669"/>
    <property type="project" value="UniProtKB-KW"/>
</dbReference>
<dbReference type="GO" id="GO:0016887">
    <property type="term" value="F:ATP hydrolysis activity"/>
    <property type="evidence" value="ECO:0007669"/>
    <property type="project" value="InterPro"/>
</dbReference>
<dbReference type="GO" id="GO:0015415">
    <property type="term" value="F:ATPase-coupled phosphate ion transmembrane transporter activity"/>
    <property type="evidence" value="ECO:0007669"/>
    <property type="project" value="UniProtKB-EC"/>
</dbReference>
<dbReference type="GO" id="GO:0035435">
    <property type="term" value="P:phosphate ion transmembrane transport"/>
    <property type="evidence" value="ECO:0007669"/>
    <property type="project" value="InterPro"/>
</dbReference>
<dbReference type="CDD" id="cd03260">
    <property type="entry name" value="ABC_PstB_phosphate_transporter"/>
    <property type="match status" value="1"/>
</dbReference>
<dbReference type="FunFam" id="3.40.50.300:FF:000132">
    <property type="entry name" value="Phosphate import ATP-binding protein PstB"/>
    <property type="match status" value="1"/>
</dbReference>
<dbReference type="Gene3D" id="3.40.50.300">
    <property type="entry name" value="P-loop containing nucleotide triphosphate hydrolases"/>
    <property type="match status" value="1"/>
</dbReference>
<dbReference type="InterPro" id="IPR003593">
    <property type="entry name" value="AAA+_ATPase"/>
</dbReference>
<dbReference type="InterPro" id="IPR003439">
    <property type="entry name" value="ABC_transporter-like_ATP-bd"/>
</dbReference>
<dbReference type="InterPro" id="IPR017871">
    <property type="entry name" value="ABC_transporter-like_CS"/>
</dbReference>
<dbReference type="InterPro" id="IPR027417">
    <property type="entry name" value="P-loop_NTPase"/>
</dbReference>
<dbReference type="InterPro" id="IPR005670">
    <property type="entry name" value="PstB-like"/>
</dbReference>
<dbReference type="NCBIfam" id="TIGR00972">
    <property type="entry name" value="3a0107s01c2"/>
    <property type="match status" value="1"/>
</dbReference>
<dbReference type="PANTHER" id="PTHR43423">
    <property type="entry name" value="ABC TRANSPORTER I FAMILY MEMBER 17"/>
    <property type="match status" value="1"/>
</dbReference>
<dbReference type="PANTHER" id="PTHR43423:SF1">
    <property type="entry name" value="ABC TRANSPORTER I FAMILY MEMBER 17"/>
    <property type="match status" value="1"/>
</dbReference>
<dbReference type="Pfam" id="PF00005">
    <property type="entry name" value="ABC_tran"/>
    <property type="match status" value="1"/>
</dbReference>
<dbReference type="SMART" id="SM00382">
    <property type="entry name" value="AAA"/>
    <property type="match status" value="1"/>
</dbReference>
<dbReference type="SUPFAM" id="SSF52540">
    <property type="entry name" value="P-loop containing nucleoside triphosphate hydrolases"/>
    <property type="match status" value="1"/>
</dbReference>
<dbReference type="PROSITE" id="PS00211">
    <property type="entry name" value="ABC_TRANSPORTER_1"/>
    <property type="match status" value="1"/>
</dbReference>
<dbReference type="PROSITE" id="PS50893">
    <property type="entry name" value="ABC_TRANSPORTER_2"/>
    <property type="match status" value="1"/>
</dbReference>
<dbReference type="PROSITE" id="PS51238">
    <property type="entry name" value="PSTB"/>
    <property type="match status" value="1"/>
</dbReference>